<protein>
    <recommendedName>
        <fullName evidence="1">Lysine--tRNA ligase</fullName>
        <ecNumber evidence="1">6.1.1.6</ecNumber>
    </recommendedName>
    <alternativeName>
        <fullName evidence="1">Lysyl-tRNA synthetase</fullName>
        <shortName evidence="1">LysRS</shortName>
    </alternativeName>
</protein>
<comment type="catalytic activity">
    <reaction evidence="1">
        <text>tRNA(Lys) + L-lysine + ATP = L-lysyl-tRNA(Lys) + AMP + diphosphate</text>
        <dbReference type="Rhea" id="RHEA:20792"/>
        <dbReference type="Rhea" id="RHEA-COMP:9696"/>
        <dbReference type="Rhea" id="RHEA-COMP:9697"/>
        <dbReference type="ChEBI" id="CHEBI:30616"/>
        <dbReference type="ChEBI" id="CHEBI:32551"/>
        <dbReference type="ChEBI" id="CHEBI:33019"/>
        <dbReference type="ChEBI" id="CHEBI:78442"/>
        <dbReference type="ChEBI" id="CHEBI:78529"/>
        <dbReference type="ChEBI" id="CHEBI:456215"/>
        <dbReference type="EC" id="6.1.1.6"/>
    </reaction>
</comment>
<comment type="subcellular location">
    <subcellularLocation>
        <location evidence="1">Cytoplasm</location>
    </subcellularLocation>
</comment>
<comment type="similarity">
    <text evidence="1">Belongs to the class-I aminoacyl-tRNA synthetase family.</text>
</comment>
<dbReference type="EC" id="6.1.1.6" evidence="1"/>
<dbReference type="EMBL" id="CR936257">
    <property type="protein sequence ID" value="CAI49226.1"/>
    <property type="molecule type" value="Genomic_DNA"/>
</dbReference>
<dbReference type="RefSeq" id="WP_011322853.1">
    <property type="nucleotide sequence ID" value="NC_007426.1"/>
</dbReference>
<dbReference type="SMR" id="Q3IRL7"/>
<dbReference type="STRING" id="348780.NP_2270A"/>
<dbReference type="EnsemblBacteria" id="CAI49226">
    <property type="protein sequence ID" value="CAI49226"/>
    <property type="gene ID" value="NP_2270A"/>
</dbReference>
<dbReference type="GeneID" id="3702894"/>
<dbReference type="KEGG" id="nph:NP_2270A"/>
<dbReference type="eggNOG" id="arCOG00485">
    <property type="taxonomic scope" value="Archaea"/>
</dbReference>
<dbReference type="HOGENOM" id="CLU_025562_1_0_2"/>
<dbReference type="OrthoDB" id="6838at2157"/>
<dbReference type="Proteomes" id="UP000002698">
    <property type="component" value="Chromosome"/>
</dbReference>
<dbReference type="GO" id="GO:0005737">
    <property type="term" value="C:cytoplasm"/>
    <property type="evidence" value="ECO:0007669"/>
    <property type="project" value="UniProtKB-SubCell"/>
</dbReference>
<dbReference type="GO" id="GO:0005524">
    <property type="term" value="F:ATP binding"/>
    <property type="evidence" value="ECO:0007669"/>
    <property type="project" value="UniProtKB-UniRule"/>
</dbReference>
<dbReference type="GO" id="GO:0004824">
    <property type="term" value="F:lysine-tRNA ligase activity"/>
    <property type="evidence" value="ECO:0007669"/>
    <property type="project" value="UniProtKB-UniRule"/>
</dbReference>
<dbReference type="GO" id="GO:0000049">
    <property type="term" value="F:tRNA binding"/>
    <property type="evidence" value="ECO:0007669"/>
    <property type="project" value="InterPro"/>
</dbReference>
<dbReference type="GO" id="GO:0006430">
    <property type="term" value="P:lysyl-tRNA aminoacylation"/>
    <property type="evidence" value="ECO:0007669"/>
    <property type="project" value="UniProtKB-UniRule"/>
</dbReference>
<dbReference type="Gene3D" id="1.10.10.350">
    <property type="match status" value="1"/>
</dbReference>
<dbReference type="Gene3D" id="1.10.10.770">
    <property type="match status" value="1"/>
</dbReference>
<dbReference type="Gene3D" id="3.40.50.620">
    <property type="entry name" value="HUPs"/>
    <property type="match status" value="2"/>
</dbReference>
<dbReference type="Gene3D" id="6.10.20.10">
    <property type="entry name" value="Lysine tRNA ligase, stem contact fold domain"/>
    <property type="match status" value="1"/>
</dbReference>
<dbReference type="HAMAP" id="MF_00177">
    <property type="entry name" value="Lys_tRNA_synth_class1"/>
    <property type="match status" value="1"/>
</dbReference>
<dbReference type="InterPro" id="IPR020751">
    <property type="entry name" value="aa-tRNA-synth_I_codon-bd_sub2"/>
</dbReference>
<dbReference type="InterPro" id="IPR001412">
    <property type="entry name" value="aa-tRNA-synth_I_CS"/>
</dbReference>
<dbReference type="InterPro" id="IPR008925">
    <property type="entry name" value="aa_tRNA-synth_I_cd-bd_sf"/>
</dbReference>
<dbReference type="InterPro" id="IPR002904">
    <property type="entry name" value="Lys-tRNA-ligase"/>
</dbReference>
<dbReference type="InterPro" id="IPR042078">
    <property type="entry name" value="Lys-tRNA-ligase_SC_fold"/>
</dbReference>
<dbReference type="InterPro" id="IPR014729">
    <property type="entry name" value="Rossmann-like_a/b/a_fold"/>
</dbReference>
<dbReference type="NCBIfam" id="TIGR00467">
    <property type="entry name" value="lysS_arch"/>
    <property type="match status" value="1"/>
</dbReference>
<dbReference type="PANTHER" id="PTHR37940">
    <property type="entry name" value="LYSINE--TRNA LIGASE"/>
    <property type="match status" value="1"/>
</dbReference>
<dbReference type="PANTHER" id="PTHR37940:SF1">
    <property type="entry name" value="LYSINE--TRNA LIGASE"/>
    <property type="match status" value="1"/>
</dbReference>
<dbReference type="Pfam" id="PF01921">
    <property type="entry name" value="tRNA-synt_1f"/>
    <property type="match status" value="1"/>
</dbReference>
<dbReference type="SUPFAM" id="SSF48163">
    <property type="entry name" value="An anticodon-binding domain of class I aminoacyl-tRNA synthetases"/>
    <property type="match status" value="1"/>
</dbReference>
<dbReference type="SUPFAM" id="SSF52374">
    <property type="entry name" value="Nucleotidylyl transferase"/>
    <property type="match status" value="1"/>
</dbReference>
<dbReference type="PROSITE" id="PS00178">
    <property type="entry name" value="AA_TRNA_LIGASE_I"/>
    <property type="match status" value="1"/>
</dbReference>
<name>SYK_NATPD</name>
<proteinExistence type="inferred from homology"/>
<evidence type="ECO:0000255" key="1">
    <source>
        <dbReference type="HAMAP-Rule" id="MF_00177"/>
    </source>
</evidence>
<organism>
    <name type="scientific">Natronomonas pharaonis (strain ATCC 35678 / DSM 2160 / CIP 103997 / JCM 8858 / NBRC 14720 / NCIMB 2260 / Gabara)</name>
    <name type="common">Halobacterium pharaonis</name>
    <dbReference type="NCBI Taxonomy" id="348780"/>
    <lineage>
        <taxon>Archaea</taxon>
        <taxon>Methanobacteriati</taxon>
        <taxon>Methanobacteriota</taxon>
        <taxon>Stenosarchaea group</taxon>
        <taxon>Halobacteria</taxon>
        <taxon>Halobacteriales</taxon>
        <taxon>Haloarculaceae</taxon>
        <taxon>Natronomonas</taxon>
    </lineage>
</organism>
<accession>Q3IRL7</accession>
<gene>
    <name evidence="1" type="primary">lysS</name>
    <name type="ordered locus">NP_2270A</name>
</gene>
<reference key="1">
    <citation type="journal article" date="2005" name="Genome Res.">
        <title>Living with two extremes: conclusions from the genome sequence of Natronomonas pharaonis.</title>
        <authorList>
            <person name="Falb M."/>
            <person name="Pfeiffer F."/>
            <person name="Palm P."/>
            <person name="Rodewald K."/>
            <person name="Hickmann V."/>
            <person name="Tittor J."/>
            <person name="Oesterhelt D."/>
        </authorList>
    </citation>
    <scope>NUCLEOTIDE SEQUENCE [LARGE SCALE GENOMIC DNA]</scope>
    <source>
        <strain>ATCC 35678 / DSM 2160 / CIP 103997 / JCM 8858 / NBRC 14720 / NCIMB 2260 / Gabara</strain>
    </source>
</reference>
<feature type="chain" id="PRO_0000225643" description="Lysine--tRNA ligase">
    <location>
        <begin position="1"/>
        <end position="545"/>
    </location>
</feature>
<feature type="short sequence motif" description="'HIGH' region">
    <location>
        <begin position="41"/>
        <end position="49"/>
    </location>
</feature>
<feature type="short sequence motif" description="'KMSKS' region">
    <location>
        <begin position="306"/>
        <end position="310"/>
    </location>
</feature>
<keyword id="KW-0030">Aminoacyl-tRNA synthetase</keyword>
<keyword id="KW-0067">ATP-binding</keyword>
<keyword id="KW-0963">Cytoplasm</keyword>
<keyword id="KW-0436">Ligase</keyword>
<keyword id="KW-0547">Nucleotide-binding</keyword>
<keyword id="KW-0648">Protein biosynthesis</keyword>
<keyword id="KW-1185">Reference proteome</keyword>
<sequence>MSDLYDLGTGEKRPFWADAAADEVEARDPDEPVTIKGGVSPSGVPHLGHFNEIMRGYFVAEALRERGYEVRQVFTTDDKDRLRKLPRKLADLDWNVVGLGEVDAGALGRNLGRPYTDIPDPFGCCDSYGAHFTELLRRSAEAIGVPIDLVSNTELYAGGDFDAAVEDALANRDTAREVLSEFQDKVDDEYVPFFPQCAECGLLTETVTDIDLDDGTVGYVCSDVEAGDDVIEGCGHEGRATFRAGKLPWRFEWPAQWRVLGVDFEPFGKDHAEGSWPSGKAVSREVFDTEPPVPMVYEWFTLNGDALSSSAGNIITVDEVLELLEPAVLRYFFTKNPKKQRDFDVSNLDRFVDEFDRFEAGYFGDESVEDDERARADRAYPMVVDELPERQPVRIPYTFAAVLGMTDDRDLRLQMAQRSGHIPDDATDDQIERALERVEKARAWAVRTDNEFNYRLAETLPAVDFDAETAAALDELAAFVETESPDDETLQGEIYETAKRNDVDVGDLFSAGYRLFLDESEGPRLGPLLSAMDETFVVERLRREG</sequence>